<proteinExistence type="inferred from homology"/>
<feature type="chain" id="PRO_1000131825" description="Probable Fe(2+)-trafficking protein">
    <location>
        <begin position="1"/>
        <end position="90"/>
    </location>
</feature>
<sequence>MSRTVFCVLLNKEADGLDFQLYPGELGKRIFDNISKEAWGQWQHKQTMLINEKKLNMMDPEHRKMLETEMEGFLFDGKDVVIDGYTPPSK</sequence>
<keyword id="KW-0408">Iron</keyword>
<comment type="function">
    <text evidence="1">Could be a mediator in iron transactions between iron acquisition and iron-requiring processes, such as synthesis and/or repair of Fe-S clusters in biosynthetic enzymes.</text>
</comment>
<comment type="similarity">
    <text evidence="1">Belongs to the Fe(2+)-trafficking protein family.</text>
</comment>
<gene>
    <name type="ordered locus">VSAL_I0533</name>
</gene>
<evidence type="ECO:0000255" key="1">
    <source>
        <dbReference type="HAMAP-Rule" id="MF_00686"/>
    </source>
</evidence>
<dbReference type="EMBL" id="FM178379">
    <property type="protein sequence ID" value="CAQ78218.1"/>
    <property type="molecule type" value="Genomic_DNA"/>
</dbReference>
<dbReference type="RefSeq" id="WP_012549342.1">
    <property type="nucleotide sequence ID" value="NC_011312.1"/>
</dbReference>
<dbReference type="SMR" id="B6EMT9"/>
<dbReference type="KEGG" id="vsa:VSAL_I0533"/>
<dbReference type="eggNOG" id="COG2924">
    <property type="taxonomic scope" value="Bacteria"/>
</dbReference>
<dbReference type="HOGENOM" id="CLU_170994_0_0_6"/>
<dbReference type="Proteomes" id="UP000001730">
    <property type="component" value="Chromosome 1"/>
</dbReference>
<dbReference type="GO" id="GO:0005829">
    <property type="term" value="C:cytosol"/>
    <property type="evidence" value="ECO:0007669"/>
    <property type="project" value="TreeGrafter"/>
</dbReference>
<dbReference type="GO" id="GO:0005506">
    <property type="term" value="F:iron ion binding"/>
    <property type="evidence" value="ECO:0007669"/>
    <property type="project" value="UniProtKB-UniRule"/>
</dbReference>
<dbReference type="GO" id="GO:0034599">
    <property type="term" value="P:cellular response to oxidative stress"/>
    <property type="evidence" value="ECO:0007669"/>
    <property type="project" value="TreeGrafter"/>
</dbReference>
<dbReference type="FunFam" id="1.10.3880.10:FF:000001">
    <property type="entry name" value="Probable Fe(2+)-trafficking protein"/>
    <property type="match status" value="1"/>
</dbReference>
<dbReference type="Gene3D" id="1.10.3880.10">
    <property type="entry name" value="Fe(II) trafficking protein YggX"/>
    <property type="match status" value="1"/>
</dbReference>
<dbReference type="HAMAP" id="MF_00686">
    <property type="entry name" value="Fe_traffic_YggX"/>
    <property type="match status" value="1"/>
</dbReference>
<dbReference type="InterPro" id="IPR007457">
    <property type="entry name" value="Fe_traffick_prot_YggX"/>
</dbReference>
<dbReference type="InterPro" id="IPR036766">
    <property type="entry name" value="Fe_traffick_prot_YggX_sf"/>
</dbReference>
<dbReference type="NCBIfam" id="NF003817">
    <property type="entry name" value="PRK05408.1"/>
    <property type="match status" value="1"/>
</dbReference>
<dbReference type="PANTHER" id="PTHR36965">
    <property type="entry name" value="FE(2+)-TRAFFICKING PROTEIN-RELATED"/>
    <property type="match status" value="1"/>
</dbReference>
<dbReference type="PANTHER" id="PTHR36965:SF1">
    <property type="entry name" value="FE(2+)-TRAFFICKING PROTEIN-RELATED"/>
    <property type="match status" value="1"/>
</dbReference>
<dbReference type="Pfam" id="PF04362">
    <property type="entry name" value="Iron_traffic"/>
    <property type="match status" value="1"/>
</dbReference>
<dbReference type="PIRSF" id="PIRSF029827">
    <property type="entry name" value="Fe_traffic_YggX"/>
    <property type="match status" value="1"/>
</dbReference>
<dbReference type="SUPFAM" id="SSF111148">
    <property type="entry name" value="YggX-like"/>
    <property type="match status" value="1"/>
</dbReference>
<accession>B6EMT9</accession>
<name>FETP_ALISL</name>
<reference key="1">
    <citation type="journal article" date="2008" name="BMC Genomics">
        <title>The genome sequence of the fish pathogen Aliivibrio salmonicida strain LFI1238 shows extensive evidence of gene decay.</title>
        <authorList>
            <person name="Hjerde E."/>
            <person name="Lorentzen M.S."/>
            <person name="Holden M.T."/>
            <person name="Seeger K."/>
            <person name="Paulsen S."/>
            <person name="Bason N."/>
            <person name="Churcher C."/>
            <person name="Harris D."/>
            <person name="Norbertczak H."/>
            <person name="Quail M.A."/>
            <person name="Sanders S."/>
            <person name="Thurston S."/>
            <person name="Parkhill J."/>
            <person name="Willassen N.P."/>
            <person name="Thomson N.R."/>
        </authorList>
    </citation>
    <scope>NUCLEOTIDE SEQUENCE [LARGE SCALE GENOMIC DNA]</scope>
    <source>
        <strain>LFI1238</strain>
    </source>
</reference>
<protein>
    <recommendedName>
        <fullName evidence="1">Probable Fe(2+)-trafficking protein</fullName>
    </recommendedName>
</protein>
<organism>
    <name type="scientific">Aliivibrio salmonicida (strain LFI1238)</name>
    <name type="common">Vibrio salmonicida (strain LFI1238)</name>
    <dbReference type="NCBI Taxonomy" id="316275"/>
    <lineage>
        <taxon>Bacteria</taxon>
        <taxon>Pseudomonadati</taxon>
        <taxon>Pseudomonadota</taxon>
        <taxon>Gammaproteobacteria</taxon>
        <taxon>Vibrionales</taxon>
        <taxon>Vibrionaceae</taxon>
        <taxon>Aliivibrio</taxon>
    </lineage>
</organism>